<reference key="1">
    <citation type="journal article" date="2006" name="BMC Plant Biol.">
        <title>The complete chloroplast genome sequence of Citrus sinensis (L.) Osbeck var 'Ridge Pineapple': organization and phylogenetic relationships to other angiosperms.</title>
        <authorList>
            <person name="Bausher M.G."/>
            <person name="Singh N.D."/>
            <person name="Lee S.-B."/>
            <person name="Jansen R.K."/>
            <person name="Daniell H."/>
        </authorList>
    </citation>
    <scope>NUCLEOTIDE SEQUENCE [LARGE SCALE GENOMIC DNA]</scope>
    <source>
        <strain>cv. Osbeck var. Ridge Pineapple</strain>
    </source>
</reference>
<name>NU4C_CITSI</name>
<comment type="catalytic activity">
    <reaction evidence="1">
        <text>a plastoquinone + NADH + (n+1) H(+)(in) = a plastoquinol + NAD(+) + n H(+)(out)</text>
        <dbReference type="Rhea" id="RHEA:42608"/>
        <dbReference type="Rhea" id="RHEA-COMP:9561"/>
        <dbReference type="Rhea" id="RHEA-COMP:9562"/>
        <dbReference type="ChEBI" id="CHEBI:15378"/>
        <dbReference type="ChEBI" id="CHEBI:17757"/>
        <dbReference type="ChEBI" id="CHEBI:57540"/>
        <dbReference type="ChEBI" id="CHEBI:57945"/>
        <dbReference type="ChEBI" id="CHEBI:62192"/>
    </reaction>
</comment>
<comment type="catalytic activity">
    <reaction evidence="1">
        <text>a plastoquinone + NADPH + (n+1) H(+)(in) = a plastoquinol + NADP(+) + n H(+)(out)</text>
        <dbReference type="Rhea" id="RHEA:42612"/>
        <dbReference type="Rhea" id="RHEA-COMP:9561"/>
        <dbReference type="Rhea" id="RHEA-COMP:9562"/>
        <dbReference type="ChEBI" id="CHEBI:15378"/>
        <dbReference type="ChEBI" id="CHEBI:17757"/>
        <dbReference type="ChEBI" id="CHEBI:57783"/>
        <dbReference type="ChEBI" id="CHEBI:58349"/>
        <dbReference type="ChEBI" id="CHEBI:62192"/>
    </reaction>
</comment>
<comment type="subcellular location">
    <subcellularLocation>
        <location evidence="1">Plastid</location>
        <location evidence="1">Chloroplast thylakoid membrane</location>
        <topology evidence="1">Multi-pass membrane protein</topology>
    </subcellularLocation>
</comment>
<comment type="similarity">
    <text evidence="1">Belongs to the complex I subunit 4 family.</text>
</comment>
<keyword id="KW-0150">Chloroplast</keyword>
<keyword id="KW-0472">Membrane</keyword>
<keyword id="KW-0520">NAD</keyword>
<keyword id="KW-0521">NADP</keyword>
<keyword id="KW-0934">Plastid</keyword>
<keyword id="KW-0618">Plastoquinone</keyword>
<keyword id="KW-0874">Quinone</keyword>
<keyword id="KW-0793">Thylakoid</keyword>
<keyword id="KW-1278">Translocase</keyword>
<keyword id="KW-0812">Transmembrane</keyword>
<keyword id="KW-1133">Transmembrane helix</keyword>
<geneLocation type="chloroplast"/>
<dbReference type="EC" id="7.1.1.-" evidence="1"/>
<dbReference type="EMBL" id="DQ864733">
    <property type="protein sequence ID" value="ABI49071.1"/>
    <property type="molecule type" value="Genomic_DNA"/>
</dbReference>
<dbReference type="RefSeq" id="YP_740527.1">
    <property type="nucleotide sequence ID" value="NC_008334.1"/>
</dbReference>
<dbReference type="SMR" id="Q09MC6"/>
<dbReference type="GeneID" id="4271114"/>
<dbReference type="KEGG" id="cit:4271114"/>
<dbReference type="OrthoDB" id="782684at71240"/>
<dbReference type="GO" id="GO:0009535">
    <property type="term" value="C:chloroplast thylakoid membrane"/>
    <property type="evidence" value="ECO:0007669"/>
    <property type="project" value="UniProtKB-SubCell"/>
</dbReference>
<dbReference type="GO" id="GO:0008137">
    <property type="term" value="F:NADH dehydrogenase (ubiquinone) activity"/>
    <property type="evidence" value="ECO:0007669"/>
    <property type="project" value="InterPro"/>
</dbReference>
<dbReference type="GO" id="GO:0048038">
    <property type="term" value="F:quinone binding"/>
    <property type="evidence" value="ECO:0007669"/>
    <property type="project" value="UniProtKB-KW"/>
</dbReference>
<dbReference type="GO" id="GO:0042773">
    <property type="term" value="P:ATP synthesis coupled electron transport"/>
    <property type="evidence" value="ECO:0007669"/>
    <property type="project" value="InterPro"/>
</dbReference>
<dbReference type="HAMAP" id="MF_00491">
    <property type="entry name" value="NDH1_NuoM"/>
    <property type="match status" value="1"/>
</dbReference>
<dbReference type="InterPro" id="IPR022997">
    <property type="entry name" value="NADH_Q_OxRdtase_chain4"/>
</dbReference>
<dbReference type="InterPro" id="IPR010227">
    <property type="entry name" value="NADH_Q_OxRdtase_chainM/4"/>
</dbReference>
<dbReference type="InterPro" id="IPR003918">
    <property type="entry name" value="NADH_UbQ_OxRdtase"/>
</dbReference>
<dbReference type="InterPro" id="IPR001750">
    <property type="entry name" value="ND/Mrp_TM"/>
</dbReference>
<dbReference type="NCBIfam" id="TIGR01972">
    <property type="entry name" value="NDH_I_M"/>
    <property type="match status" value="1"/>
</dbReference>
<dbReference type="PANTHER" id="PTHR43507:SF21">
    <property type="entry name" value="NAD(P)H-QUINONE OXIDOREDUCTASE CHAIN 4, CHLOROPLASTIC"/>
    <property type="match status" value="1"/>
</dbReference>
<dbReference type="PANTHER" id="PTHR43507">
    <property type="entry name" value="NADH-UBIQUINONE OXIDOREDUCTASE CHAIN 4"/>
    <property type="match status" value="1"/>
</dbReference>
<dbReference type="Pfam" id="PF00361">
    <property type="entry name" value="Proton_antipo_M"/>
    <property type="match status" value="1"/>
</dbReference>
<dbReference type="PRINTS" id="PR01437">
    <property type="entry name" value="NUOXDRDTASE4"/>
</dbReference>
<proteinExistence type="inferred from homology"/>
<organism>
    <name type="scientific">Citrus sinensis</name>
    <name type="common">Sweet orange</name>
    <name type="synonym">Citrus aurantium var. sinensis</name>
    <dbReference type="NCBI Taxonomy" id="2711"/>
    <lineage>
        <taxon>Eukaryota</taxon>
        <taxon>Viridiplantae</taxon>
        <taxon>Streptophyta</taxon>
        <taxon>Embryophyta</taxon>
        <taxon>Tracheophyta</taxon>
        <taxon>Spermatophyta</taxon>
        <taxon>Magnoliopsida</taxon>
        <taxon>eudicotyledons</taxon>
        <taxon>Gunneridae</taxon>
        <taxon>Pentapetalae</taxon>
        <taxon>rosids</taxon>
        <taxon>malvids</taxon>
        <taxon>Sapindales</taxon>
        <taxon>Rutaceae</taxon>
        <taxon>Aurantioideae</taxon>
        <taxon>Citrus</taxon>
    </lineage>
</organism>
<accession>Q09MC6</accession>
<gene>
    <name evidence="1" type="primary">ndhD</name>
</gene>
<feature type="chain" id="PRO_0000275902" description="NAD(P)H-quinone oxidoreductase chain 4, chloroplastic">
    <location>
        <begin position="1"/>
        <end position="499"/>
    </location>
</feature>
<feature type="transmembrane region" description="Helical" evidence="1">
    <location>
        <begin position="4"/>
        <end position="24"/>
    </location>
</feature>
<feature type="transmembrane region" description="Helical" evidence="1">
    <location>
        <begin position="35"/>
        <end position="55"/>
    </location>
</feature>
<feature type="transmembrane region" description="Helical" evidence="1">
    <location>
        <begin position="84"/>
        <end position="104"/>
    </location>
</feature>
<feature type="transmembrane region" description="Helical" evidence="1">
    <location>
        <begin position="111"/>
        <end position="129"/>
    </location>
</feature>
<feature type="transmembrane region" description="Helical" evidence="1">
    <location>
        <begin position="134"/>
        <end position="154"/>
    </location>
</feature>
<feature type="transmembrane region" description="Helical" evidence="1">
    <location>
        <begin position="167"/>
        <end position="187"/>
    </location>
</feature>
<feature type="transmembrane region" description="Helical" evidence="1">
    <location>
        <begin position="208"/>
        <end position="228"/>
    </location>
</feature>
<feature type="transmembrane region" description="Helical" evidence="1">
    <location>
        <begin position="242"/>
        <end position="262"/>
    </location>
</feature>
<feature type="transmembrane region" description="Helical" evidence="1">
    <location>
        <begin position="272"/>
        <end position="292"/>
    </location>
</feature>
<feature type="transmembrane region" description="Helical" evidence="1">
    <location>
        <begin position="305"/>
        <end position="325"/>
    </location>
</feature>
<feature type="transmembrane region" description="Helical" evidence="1">
    <location>
        <begin position="330"/>
        <end position="350"/>
    </location>
</feature>
<feature type="transmembrane region" description="Helical" evidence="1">
    <location>
        <begin position="386"/>
        <end position="406"/>
    </location>
</feature>
<feature type="transmembrane region" description="Helical" evidence="1">
    <location>
        <begin position="416"/>
        <end position="436"/>
    </location>
</feature>
<feature type="transmembrane region" description="Helical" evidence="1">
    <location>
        <begin position="462"/>
        <end position="482"/>
    </location>
</feature>
<sequence>MNYFPWLTLIVVFPIAAGSLIFFLPHRGNKVTRGYTIYICVLELLLTTYAFCYNFQLDDPLIQLAEDYKWITFFEFDWRLGIDGLSIGPILLTGFITTLATLAARPVTLNSRLFHFLMLAMYSGQIGSFSSRDLLLFFIMWELELIPVYLLLSVWGGKKRLYSATKFILYTAGGSVFLLIGVLGIGLYGSNEPTLNLETLVNRSYPVALEIIFYIGFFIAFAVKLPIIPFHTWLPDTHGEAHYSTCMLLAGILLKMGAYGLIRINMELLPHAHSIFSPWFMIVGTVQIIYAASTSPGQRNLKKRIAYSSVSHMGFIILGIGSITDTGLNGAVLQIISHGLISAALFFLAGTSYDRIRFAYLDEMGGLAIPIPKIFTLFSILSMASLALPGMSGFVAELIVFFGIITSQKFFLMPKIVITFVMAIGMILTPIYSLSMLRQMFYGYKLFNAPNSYFFDSGPRELFVLISILLPVIGIGIYPDFVLSLSADKAEAIISNFFL</sequence>
<evidence type="ECO:0000255" key="1">
    <source>
        <dbReference type="HAMAP-Rule" id="MF_00491"/>
    </source>
</evidence>
<protein>
    <recommendedName>
        <fullName evidence="1">NAD(P)H-quinone oxidoreductase chain 4, chloroplastic</fullName>
        <ecNumber evidence="1">7.1.1.-</ecNumber>
    </recommendedName>
    <alternativeName>
        <fullName evidence="1">NAD(P)H dehydrogenase, chain 4</fullName>
    </alternativeName>
    <alternativeName>
        <fullName evidence="1">NADH-plastoquinone oxidoreductase chain 4</fullName>
    </alternativeName>
</protein>